<comment type="function">
    <text evidence="1">Bifunctional enzyme with both catalase and broad-spectrum peroxidase activity.</text>
</comment>
<comment type="catalytic activity">
    <reaction evidence="1">
        <text>H2O2 + AH2 = A + 2 H2O</text>
        <dbReference type="Rhea" id="RHEA:30275"/>
        <dbReference type="ChEBI" id="CHEBI:13193"/>
        <dbReference type="ChEBI" id="CHEBI:15377"/>
        <dbReference type="ChEBI" id="CHEBI:16240"/>
        <dbReference type="ChEBI" id="CHEBI:17499"/>
        <dbReference type="EC" id="1.11.1.21"/>
    </reaction>
</comment>
<comment type="catalytic activity">
    <reaction evidence="1">
        <text>2 H2O2 = O2 + 2 H2O</text>
        <dbReference type="Rhea" id="RHEA:20309"/>
        <dbReference type="ChEBI" id="CHEBI:15377"/>
        <dbReference type="ChEBI" id="CHEBI:15379"/>
        <dbReference type="ChEBI" id="CHEBI:16240"/>
        <dbReference type="EC" id="1.11.1.21"/>
    </reaction>
</comment>
<comment type="cofactor">
    <cofactor evidence="1">
        <name>heme b</name>
        <dbReference type="ChEBI" id="CHEBI:60344"/>
    </cofactor>
    <text evidence="1">Binds 1 heme b (iron(II)-protoporphyrin IX) group per dimer.</text>
</comment>
<comment type="subunit">
    <text evidence="1">Homodimer or homotetramer.</text>
</comment>
<comment type="PTM">
    <text evidence="1">Formation of the three residue Trp-Tyr-Met cross-link is important for the catalase, but not the peroxidase activity of the enzyme.</text>
</comment>
<comment type="similarity">
    <text evidence="1">Belongs to the peroxidase family. Peroxidase/catalase subfamily.</text>
</comment>
<feature type="chain" id="PRO_0000354906" description="Catalase-peroxidase">
    <location>
        <begin position="1"/>
        <end position="726"/>
    </location>
</feature>
<feature type="region of interest" description="Disordered" evidence="2">
    <location>
        <begin position="1"/>
        <end position="33"/>
    </location>
</feature>
<feature type="active site" description="Proton acceptor" evidence="1">
    <location>
        <position position="106"/>
    </location>
</feature>
<feature type="binding site" description="axial binding residue" evidence="1">
    <location>
        <position position="267"/>
    </location>
    <ligand>
        <name>heme b</name>
        <dbReference type="ChEBI" id="CHEBI:60344"/>
    </ligand>
    <ligandPart>
        <name>Fe</name>
        <dbReference type="ChEBI" id="CHEBI:18248"/>
    </ligandPart>
</feature>
<feature type="site" description="Transition state stabilizer" evidence="1">
    <location>
        <position position="102"/>
    </location>
</feature>
<feature type="cross-link" description="Tryptophyl-tyrosyl-methioninium (Trp-Tyr) (with M-252)" evidence="1">
    <location>
        <begin position="105"/>
        <end position="226"/>
    </location>
</feature>
<feature type="cross-link" description="Tryptophyl-tyrosyl-methioninium (Tyr-Met) (with W-105)" evidence="1">
    <location>
        <begin position="226"/>
        <end position="252"/>
    </location>
</feature>
<reference key="1">
    <citation type="journal article" date="2011" name="J. Bacteriol.">
        <title>Comparative genomics of 28 Salmonella enterica isolates: evidence for CRISPR-mediated adaptive sublineage evolution.</title>
        <authorList>
            <person name="Fricke W.F."/>
            <person name="Mammel M.K."/>
            <person name="McDermott P.F."/>
            <person name="Tartera C."/>
            <person name="White D.G."/>
            <person name="Leclerc J.E."/>
            <person name="Ravel J."/>
            <person name="Cebula T.A."/>
        </authorList>
    </citation>
    <scope>NUCLEOTIDE SEQUENCE [LARGE SCALE GENOMIC DNA]</scope>
    <source>
        <strain>SL476</strain>
    </source>
</reference>
<keyword id="KW-0349">Heme</keyword>
<keyword id="KW-0376">Hydrogen peroxide</keyword>
<keyword id="KW-0408">Iron</keyword>
<keyword id="KW-0479">Metal-binding</keyword>
<keyword id="KW-0560">Oxidoreductase</keyword>
<keyword id="KW-0575">Peroxidase</keyword>
<name>KATG_SALHS</name>
<gene>
    <name evidence="1" type="primary">katG</name>
    <name type="ordered locus">SeHA_C4441</name>
</gene>
<protein>
    <recommendedName>
        <fullName evidence="1">Catalase-peroxidase</fullName>
        <shortName evidence="1">CP</shortName>
        <ecNumber evidence="1">1.11.1.21</ecNumber>
    </recommendedName>
    <alternativeName>
        <fullName evidence="1">Peroxidase/catalase</fullName>
    </alternativeName>
</protein>
<dbReference type="EC" id="1.11.1.21" evidence="1"/>
<dbReference type="EMBL" id="CP001120">
    <property type="protein sequence ID" value="ACF70224.1"/>
    <property type="molecule type" value="Genomic_DNA"/>
</dbReference>
<dbReference type="RefSeq" id="WP_000108103.1">
    <property type="nucleotide sequence ID" value="NC_011083.1"/>
</dbReference>
<dbReference type="SMR" id="B4TCP6"/>
<dbReference type="KEGG" id="seh:SeHA_C4441"/>
<dbReference type="HOGENOM" id="CLU_025424_2_0_6"/>
<dbReference type="Proteomes" id="UP000001866">
    <property type="component" value="Chromosome"/>
</dbReference>
<dbReference type="GO" id="GO:0005829">
    <property type="term" value="C:cytosol"/>
    <property type="evidence" value="ECO:0007669"/>
    <property type="project" value="TreeGrafter"/>
</dbReference>
<dbReference type="GO" id="GO:0004096">
    <property type="term" value="F:catalase activity"/>
    <property type="evidence" value="ECO:0007669"/>
    <property type="project" value="UniProtKB-UniRule"/>
</dbReference>
<dbReference type="GO" id="GO:0020037">
    <property type="term" value="F:heme binding"/>
    <property type="evidence" value="ECO:0007669"/>
    <property type="project" value="InterPro"/>
</dbReference>
<dbReference type="GO" id="GO:0046872">
    <property type="term" value="F:metal ion binding"/>
    <property type="evidence" value="ECO:0007669"/>
    <property type="project" value="UniProtKB-KW"/>
</dbReference>
<dbReference type="GO" id="GO:0070301">
    <property type="term" value="P:cellular response to hydrogen peroxide"/>
    <property type="evidence" value="ECO:0007669"/>
    <property type="project" value="TreeGrafter"/>
</dbReference>
<dbReference type="GO" id="GO:0042744">
    <property type="term" value="P:hydrogen peroxide catabolic process"/>
    <property type="evidence" value="ECO:0007669"/>
    <property type="project" value="UniProtKB-KW"/>
</dbReference>
<dbReference type="CDD" id="cd08200">
    <property type="entry name" value="catalase_peroxidase_2"/>
    <property type="match status" value="1"/>
</dbReference>
<dbReference type="FunFam" id="1.10.420.10:FF:000002">
    <property type="entry name" value="Catalase-peroxidase"/>
    <property type="match status" value="1"/>
</dbReference>
<dbReference type="FunFam" id="1.10.420.10:FF:000004">
    <property type="entry name" value="Catalase-peroxidase"/>
    <property type="match status" value="1"/>
</dbReference>
<dbReference type="FunFam" id="1.10.520.10:FF:000002">
    <property type="entry name" value="Catalase-peroxidase"/>
    <property type="match status" value="1"/>
</dbReference>
<dbReference type="Gene3D" id="1.10.520.10">
    <property type="match status" value="2"/>
</dbReference>
<dbReference type="Gene3D" id="1.10.420.10">
    <property type="entry name" value="Peroxidase, domain 2"/>
    <property type="match status" value="2"/>
</dbReference>
<dbReference type="HAMAP" id="MF_01961">
    <property type="entry name" value="Catal_peroxid"/>
    <property type="match status" value="1"/>
</dbReference>
<dbReference type="InterPro" id="IPR000763">
    <property type="entry name" value="Catalase_peroxidase"/>
</dbReference>
<dbReference type="InterPro" id="IPR002016">
    <property type="entry name" value="Haem_peroxidase"/>
</dbReference>
<dbReference type="InterPro" id="IPR010255">
    <property type="entry name" value="Haem_peroxidase_sf"/>
</dbReference>
<dbReference type="InterPro" id="IPR019794">
    <property type="entry name" value="Peroxidases_AS"/>
</dbReference>
<dbReference type="InterPro" id="IPR019793">
    <property type="entry name" value="Peroxidases_heam-ligand_BS"/>
</dbReference>
<dbReference type="NCBIfam" id="TIGR00198">
    <property type="entry name" value="cat_per_HPI"/>
    <property type="match status" value="1"/>
</dbReference>
<dbReference type="NCBIfam" id="NF011635">
    <property type="entry name" value="PRK15061.1"/>
    <property type="match status" value="1"/>
</dbReference>
<dbReference type="PANTHER" id="PTHR30555:SF0">
    <property type="entry name" value="CATALASE-PEROXIDASE"/>
    <property type="match status" value="1"/>
</dbReference>
<dbReference type="PANTHER" id="PTHR30555">
    <property type="entry name" value="HYDROPEROXIDASE I, BIFUNCTIONAL CATALASE-PEROXIDASE"/>
    <property type="match status" value="1"/>
</dbReference>
<dbReference type="Pfam" id="PF00141">
    <property type="entry name" value="peroxidase"/>
    <property type="match status" value="2"/>
</dbReference>
<dbReference type="PRINTS" id="PR00460">
    <property type="entry name" value="BPEROXIDASE"/>
</dbReference>
<dbReference type="PRINTS" id="PR00458">
    <property type="entry name" value="PEROXIDASE"/>
</dbReference>
<dbReference type="SUPFAM" id="SSF48113">
    <property type="entry name" value="Heme-dependent peroxidases"/>
    <property type="match status" value="2"/>
</dbReference>
<dbReference type="PROSITE" id="PS00435">
    <property type="entry name" value="PEROXIDASE_1"/>
    <property type="match status" value="1"/>
</dbReference>
<dbReference type="PROSITE" id="PS00436">
    <property type="entry name" value="PEROXIDASE_2"/>
    <property type="match status" value="1"/>
</dbReference>
<dbReference type="PROSITE" id="PS50873">
    <property type="entry name" value="PEROXIDASE_4"/>
    <property type="match status" value="1"/>
</dbReference>
<proteinExistence type="inferred from homology"/>
<organism>
    <name type="scientific">Salmonella heidelberg (strain SL476)</name>
    <dbReference type="NCBI Taxonomy" id="454169"/>
    <lineage>
        <taxon>Bacteria</taxon>
        <taxon>Pseudomonadati</taxon>
        <taxon>Pseudomonadota</taxon>
        <taxon>Gammaproteobacteria</taxon>
        <taxon>Enterobacterales</taxon>
        <taxon>Enterobacteriaceae</taxon>
        <taxon>Salmonella</taxon>
    </lineage>
</organism>
<evidence type="ECO:0000255" key="1">
    <source>
        <dbReference type="HAMAP-Rule" id="MF_01961"/>
    </source>
</evidence>
<evidence type="ECO:0000256" key="2">
    <source>
        <dbReference type="SAM" id="MobiDB-lite"/>
    </source>
</evidence>
<accession>B4TCP6</accession>
<sequence length="726" mass="79656">MSTTDDTHNTLSTGKCPFHQGGHDRSAGAGTASRDWWPNQLRVDLLNQHSNRSNPLGEDFDYRKEFSKLDYSALKGDLKALLTDSQPWWPADWGSYVGLFIRMAWHGAGTYRSIDGRGGAGRGQQRFAPLNSWPDNVSLDKARRLLWPIKQKYGQKISWADLFILAGNVALENSGFRTFGFGAGREDVWEPDLDVNWGDEKAWLTHRHPEALAKAPLGATEMGLIYVNPEGPDHSGEPLSAAAAIRATFGNMGMNDEETVALIAGGHTLGKTHGAAAASHVGADPEAAPIEAQGLGWASSYGSGVGADAITSGLEVVWTQTPTQWSNYFFENLFKYEWVQTRSPAGAIQFEAVDAPDIIPDPFDPSKKRKPTMLVTDLTLRFDPEFEKISRRFLNDPQAFNEAFARAWFKLTHRDMGPKARYIGPEVPKEDLIWQDPLPQPLYQPTQEDIINLKAAIAASGLSISEMVSVAWASASTFRGGDKRGGANGARLALAPQRDWDVNAVAARVLPVLEEIQKTTNKASLADIIVLAGVVGIEQAAAAAGVSISVPFAPGRVDARQDQTDIEMFSLLEPIADGFRNYRARLDVSTTESLLIDKAQQLTLTAPEMTVLVGGMRVLGTNFDGSQNGVFTDRPGVLSTDFFANLLDMRYEWKPTDDANELFEGRDRLTGEVKYTATRADLVFGSNSVLRALAEVYACSDAHEKFVKDFVAAWVKVMNLDRFDLQ</sequence>